<organism>
    <name type="scientific">Schistosoma mansoni</name>
    <name type="common">Blood fluke</name>
    <dbReference type="NCBI Taxonomy" id="6183"/>
    <lineage>
        <taxon>Eukaryota</taxon>
        <taxon>Metazoa</taxon>
        <taxon>Spiralia</taxon>
        <taxon>Lophotrochozoa</taxon>
        <taxon>Platyhelminthes</taxon>
        <taxon>Trematoda</taxon>
        <taxon>Digenea</taxon>
        <taxon>Strigeidida</taxon>
        <taxon>Schistosomatoidea</taxon>
        <taxon>Schistosomatidae</taxon>
        <taxon>Schistosoma</taxon>
    </lineage>
</organism>
<comment type="function">
    <text evidence="1 2">Plays a role in attracting adult male S.mansoni to females in vitro.</text>
</comment>
<comment type="mass spectrometry"/>
<accession>P84575</accession>
<sequence>QVHHQK</sequence>
<reference evidence="4" key="1">
    <citation type="thesis" date="2003" institute="University of Georgia" country="United States">
        <title>Chemoattraction between adult Schistosoma mansoni worms.</title>
        <authorList>
            <person name="Ghaleb A.M.G."/>
        </authorList>
    </citation>
    <scope>PROTEIN SEQUENCE</scope>
    <scope>FUNCTION</scope>
    <scope>IDENTIFICATION BY MASS SPECTROMETRY</scope>
</reference>
<reference key="2">
    <citation type="journal article" date="2006" name="Microbes Infect.">
        <title>A 3kDa peptide is involved in the chemoattraction in vitro of the male Schistosoma mansoni to the female.</title>
        <authorList>
            <person name="Ghaleb A.M.G."/>
            <person name="Atwood J. III"/>
            <person name="Morales-Montor J."/>
            <person name="Damian R.T."/>
        </authorList>
    </citation>
    <scope>PROTEIN SEQUENCE</scope>
    <scope>FUNCTION</scope>
    <scope>MASS SPECTROMETRY</scope>
</reference>
<dbReference type="InParanoid" id="P84575"/>
<dbReference type="Proteomes" id="UP000008854">
    <property type="component" value="Unassembled WGS sequence"/>
</dbReference>
<proteinExistence type="evidence at protein level"/>
<feature type="peptide" id="PRO_0000045104" description="Male-attracting factor">
    <location>
        <begin position="1" status="less than"/>
        <end position="6" status="greater than"/>
    </location>
</feature>
<feature type="non-terminal residue" evidence="3">
    <location>
        <position position="1"/>
    </location>
</feature>
<feature type="non-terminal residue" evidence="3">
    <location>
        <position position="6"/>
    </location>
</feature>
<name>MAF_SCHMA</name>
<protein>
    <recommendedName>
        <fullName>Male-attracting factor</fullName>
    </recommendedName>
    <alternativeName>
        <fullName>Sm-MAF</fullName>
    </alternativeName>
</protein>
<keyword id="KW-0903">Direct protein sequencing</keyword>
<keyword id="KW-1185">Reference proteome</keyword>
<evidence type="ECO:0000269" key="1">
    <source>
    </source>
</evidence>
<evidence type="ECO:0000269" key="2">
    <source ref="1"/>
</evidence>
<evidence type="ECO:0000303" key="3">
    <source>
    </source>
</evidence>
<evidence type="ECO:0000305" key="4"/>